<evidence type="ECO:0000250" key="1"/>
<evidence type="ECO:0000255" key="2"/>
<evidence type="ECO:0000256" key="3">
    <source>
        <dbReference type="SAM" id="MobiDB-lite"/>
    </source>
</evidence>
<evidence type="ECO:0000305" key="4"/>
<sequence length="316" mass="35184">MTQGKLSVANKAPGTEGQQQANGEKKETPAVPSAPPSYEEATSGEGLKAGAFPPAPSAVPLHPSWAYVDPNSSSSYESGFPTGDHEFFTTFSWDDQKVRRVFIRKVYTILLIQLLVTLGVVALFTFCDPVKDYVQANPGWYWASYAVFFATYLTLACCSGPRRHFPWNLILLTIFTLSMAYLTGMLSSYYNTTSVLLCLSITALVCLSVTVFSFQTKFDFTSCQGVLFVLLMTLFFSGLILAILLPFQYVPWLHAVYAVLGAGVFTLFLAFDTQLLMGSRRHSLSPEEYIFGALNIYLDIIYIFTFFLQLFGTNRE</sequence>
<reference key="1">
    <citation type="submission" date="2006-05" db="EMBL/GenBank/DDBJ databases">
        <authorList>
            <consortium name="NIH - Mammalian Gene Collection (MGC) project"/>
        </authorList>
    </citation>
    <scope>NUCLEOTIDE SEQUENCE [LARGE SCALE MRNA]</scope>
    <source>
        <strain>Hereford</strain>
        <tissue>Fetal pons</tissue>
    </source>
</reference>
<gene>
    <name type="primary">FAIM2</name>
    <name type="synonym">LFG2</name>
</gene>
<dbReference type="EMBL" id="BC116167">
    <property type="protein sequence ID" value="AAI16168.1"/>
    <property type="molecule type" value="mRNA"/>
</dbReference>
<dbReference type="RefSeq" id="NP_001068886.1">
    <property type="nucleotide sequence ID" value="NM_001075418.2"/>
</dbReference>
<dbReference type="SMR" id="Q1LZ71"/>
<dbReference type="FunCoup" id="Q1LZ71">
    <property type="interactions" value="771"/>
</dbReference>
<dbReference type="STRING" id="9913.ENSBTAP00000063728"/>
<dbReference type="GlyCosmos" id="Q1LZ71">
    <property type="glycosylation" value="1 site, No reported glycans"/>
</dbReference>
<dbReference type="GlyGen" id="Q1LZ71">
    <property type="glycosylation" value="1 site"/>
</dbReference>
<dbReference type="PaxDb" id="9913-ENSBTAP00000023267"/>
<dbReference type="GeneID" id="509790"/>
<dbReference type="KEGG" id="bta:509790"/>
<dbReference type="CTD" id="23017"/>
<dbReference type="VEuPathDB" id="HostDB:ENSBTAG00000017504"/>
<dbReference type="eggNOG" id="KOG2322">
    <property type="taxonomic scope" value="Eukaryota"/>
</dbReference>
<dbReference type="HOGENOM" id="CLU_058671_3_2_1"/>
<dbReference type="InParanoid" id="Q1LZ71"/>
<dbReference type="OMA" id="FTGWYVY"/>
<dbReference type="OrthoDB" id="7933078at2759"/>
<dbReference type="TreeFam" id="TF319996"/>
<dbReference type="Proteomes" id="UP000009136">
    <property type="component" value="Chromosome 5"/>
</dbReference>
<dbReference type="Bgee" id="ENSBTAG00000017504">
    <property type="expression patterns" value="Expressed in prefrontal cortex and 100 other cell types or tissues"/>
</dbReference>
<dbReference type="GO" id="GO:0005783">
    <property type="term" value="C:endoplasmic reticulum"/>
    <property type="evidence" value="ECO:0000318"/>
    <property type="project" value="GO_Central"/>
</dbReference>
<dbReference type="GO" id="GO:0005794">
    <property type="term" value="C:Golgi apparatus"/>
    <property type="evidence" value="ECO:0000318"/>
    <property type="project" value="GO_Central"/>
</dbReference>
<dbReference type="GO" id="GO:0016020">
    <property type="term" value="C:membrane"/>
    <property type="evidence" value="ECO:0000318"/>
    <property type="project" value="GO_Central"/>
</dbReference>
<dbReference type="GO" id="GO:0045121">
    <property type="term" value="C:membrane raft"/>
    <property type="evidence" value="ECO:0000250"/>
    <property type="project" value="UniProtKB"/>
</dbReference>
<dbReference type="GO" id="GO:0045211">
    <property type="term" value="C:postsynaptic membrane"/>
    <property type="evidence" value="ECO:0007669"/>
    <property type="project" value="UniProtKB-SubCell"/>
</dbReference>
<dbReference type="GO" id="GO:0005262">
    <property type="term" value="F:calcium channel activity"/>
    <property type="evidence" value="ECO:0000318"/>
    <property type="project" value="GO_Central"/>
</dbReference>
<dbReference type="GO" id="GO:0097190">
    <property type="term" value="P:apoptotic signaling pathway"/>
    <property type="evidence" value="ECO:0000318"/>
    <property type="project" value="GO_Central"/>
</dbReference>
<dbReference type="GO" id="GO:0021681">
    <property type="term" value="P:cerebellar granular layer development"/>
    <property type="evidence" value="ECO:0000250"/>
    <property type="project" value="UniProtKB"/>
</dbReference>
<dbReference type="GO" id="GO:0021702">
    <property type="term" value="P:cerebellar Purkinje cell differentiation"/>
    <property type="evidence" value="ECO:0000250"/>
    <property type="project" value="UniProtKB"/>
</dbReference>
<dbReference type="GO" id="GO:0021680">
    <property type="term" value="P:cerebellar Purkinje cell layer development"/>
    <property type="evidence" value="ECO:0000250"/>
    <property type="project" value="UniProtKB"/>
</dbReference>
<dbReference type="GO" id="GO:0021549">
    <property type="term" value="P:cerebellum development"/>
    <property type="evidence" value="ECO:0000250"/>
    <property type="project" value="UniProtKB"/>
</dbReference>
<dbReference type="GO" id="GO:1902042">
    <property type="term" value="P:negative regulation of extrinsic apoptotic signaling pathway via death domain receptors"/>
    <property type="evidence" value="ECO:0000318"/>
    <property type="project" value="GO_Central"/>
</dbReference>
<dbReference type="GO" id="GO:0043524">
    <property type="term" value="P:negative regulation of neuron apoptotic process"/>
    <property type="evidence" value="ECO:0000318"/>
    <property type="project" value="GO_Central"/>
</dbReference>
<dbReference type="GO" id="GO:0043523">
    <property type="term" value="P:regulation of neuron apoptotic process"/>
    <property type="evidence" value="ECO:0000250"/>
    <property type="project" value="UniProtKB"/>
</dbReference>
<dbReference type="CDD" id="cd10428">
    <property type="entry name" value="LFG_like"/>
    <property type="match status" value="1"/>
</dbReference>
<dbReference type="InterPro" id="IPR006214">
    <property type="entry name" value="Bax_inhibitor_1-related"/>
</dbReference>
<dbReference type="PANTHER" id="PTHR23291">
    <property type="entry name" value="BAX INHIBITOR-RELATED"/>
    <property type="match status" value="1"/>
</dbReference>
<dbReference type="PANTHER" id="PTHR23291:SF18">
    <property type="entry name" value="PROTEIN LIFEGUARD 2"/>
    <property type="match status" value="1"/>
</dbReference>
<dbReference type="Pfam" id="PF01027">
    <property type="entry name" value="Bax1-I"/>
    <property type="match status" value="1"/>
</dbReference>
<keyword id="KW-0053">Apoptosis</keyword>
<keyword id="KW-1003">Cell membrane</keyword>
<keyword id="KW-0325">Glycoprotein</keyword>
<keyword id="KW-0472">Membrane</keyword>
<keyword id="KW-0628">Postsynaptic cell membrane</keyword>
<keyword id="KW-1185">Reference proteome</keyword>
<keyword id="KW-0770">Synapse</keyword>
<keyword id="KW-0812">Transmembrane</keyword>
<keyword id="KW-1133">Transmembrane helix</keyword>
<name>LFG2_BOVIN</name>
<feature type="chain" id="PRO_0000326145" description="Protein lifeguard 2">
    <location>
        <begin position="1"/>
        <end position="316"/>
    </location>
</feature>
<feature type="transmembrane region" description="Helical" evidence="2">
    <location>
        <begin position="106"/>
        <end position="126"/>
    </location>
</feature>
<feature type="transmembrane region" description="Helical" evidence="2">
    <location>
        <begin position="138"/>
        <end position="158"/>
    </location>
</feature>
<feature type="transmembrane region" description="Helical" evidence="2">
    <location>
        <begin position="165"/>
        <end position="185"/>
    </location>
</feature>
<feature type="transmembrane region" description="Helical" evidence="2">
    <location>
        <begin position="194"/>
        <end position="214"/>
    </location>
</feature>
<feature type="transmembrane region" description="Helical" evidence="2">
    <location>
        <begin position="225"/>
        <end position="245"/>
    </location>
</feature>
<feature type="transmembrane region" description="Helical" evidence="2">
    <location>
        <begin position="251"/>
        <end position="271"/>
    </location>
</feature>
<feature type="transmembrane region" description="Helical" evidence="2">
    <location>
        <begin position="290"/>
        <end position="310"/>
    </location>
</feature>
<feature type="region of interest" description="Disordered" evidence="3">
    <location>
        <begin position="1"/>
        <end position="46"/>
    </location>
</feature>
<feature type="glycosylation site" description="N-linked (GlcNAc...) asparagine" evidence="2">
    <location>
        <position position="191"/>
    </location>
</feature>
<protein>
    <recommendedName>
        <fullName>Protein lifeguard 2</fullName>
    </recommendedName>
    <alternativeName>
        <fullName>Fas apoptotic inhibitory molecule 2</fullName>
    </alternativeName>
</protein>
<accession>Q1LZ71</accession>
<organism>
    <name type="scientific">Bos taurus</name>
    <name type="common">Bovine</name>
    <dbReference type="NCBI Taxonomy" id="9913"/>
    <lineage>
        <taxon>Eukaryota</taxon>
        <taxon>Metazoa</taxon>
        <taxon>Chordata</taxon>
        <taxon>Craniata</taxon>
        <taxon>Vertebrata</taxon>
        <taxon>Euteleostomi</taxon>
        <taxon>Mammalia</taxon>
        <taxon>Eutheria</taxon>
        <taxon>Laurasiatheria</taxon>
        <taxon>Artiodactyla</taxon>
        <taxon>Ruminantia</taxon>
        <taxon>Pecora</taxon>
        <taxon>Bovidae</taxon>
        <taxon>Bovinae</taxon>
        <taxon>Bos</taxon>
    </lineage>
</organism>
<proteinExistence type="evidence at transcript level"/>
<comment type="function">
    <text evidence="1">Antiapoptotic protein which protects cells uniquely from Fas-induced apoptosis. Regulates Fas-mediated apoptosis in neurons by interfering with caspase-8 activation. Plays a role in cerebellar development by affecting cerebellar size, internal granular layer (IGL) thickness, and Purkinje cell (PC) development (By similarity).</text>
</comment>
<comment type="subunit">
    <text evidence="1">Interacts with FAS/TNFRSF6 and BAX.</text>
</comment>
<comment type="subcellular location">
    <subcellularLocation>
        <location evidence="1">Cell membrane</location>
        <topology evidence="1">Multi-pass membrane protein</topology>
    </subcellularLocation>
    <subcellularLocation>
        <location evidence="1">Membrane raft</location>
    </subcellularLocation>
    <subcellularLocation>
        <location evidence="1">Postsynaptic cell membrane</location>
    </subcellularLocation>
</comment>
<comment type="similarity">
    <text evidence="4">Belongs to the BI1 family. LFG subfamily.</text>
</comment>